<evidence type="ECO:0000255" key="1">
    <source>
        <dbReference type="HAMAP-Rule" id="MF_00074"/>
    </source>
</evidence>
<sequence>MLSAQLEAYLAEINLSATAEQKKQLIDFVGMLNKWNKAYNLTSVRDPEAMLVRHIMDSLVVSKHLQGERFIDVGTGPGLPGIPLAIMNPNKTFVLLDSLGKRIRFQKQVAFELGIRNISSVESRVEAYQAEQQFDGVLSRAFASIQDMLSWCHHLPAENGLFYALKGQLNDEELQQMPSGFVIKEIIELKVPKLDEQRHLLKIIKE</sequence>
<proteinExistence type="inferred from homology"/>
<dbReference type="EC" id="2.1.1.170" evidence="1"/>
<dbReference type="EMBL" id="CP000681">
    <property type="protein sequence ID" value="ABP77671.1"/>
    <property type="molecule type" value="Genomic_DNA"/>
</dbReference>
<dbReference type="SMR" id="A4YCI8"/>
<dbReference type="STRING" id="319224.Sputcn32_3966"/>
<dbReference type="KEGG" id="spc:Sputcn32_3966"/>
<dbReference type="eggNOG" id="COG0357">
    <property type="taxonomic scope" value="Bacteria"/>
</dbReference>
<dbReference type="HOGENOM" id="CLU_065341_2_0_6"/>
<dbReference type="GO" id="GO:0005829">
    <property type="term" value="C:cytosol"/>
    <property type="evidence" value="ECO:0007669"/>
    <property type="project" value="TreeGrafter"/>
</dbReference>
<dbReference type="GO" id="GO:0070043">
    <property type="term" value="F:rRNA (guanine-N7-)-methyltransferase activity"/>
    <property type="evidence" value="ECO:0007669"/>
    <property type="project" value="UniProtKB-UniRule"/>
</dbReference>
<dbReference type="CDD" id="cd02440">
    <property type="entry name" value="AdoMet_MTases"/>
    <property type="match status" value="1"/>
</dbReference>
<dbReference type="FunFam" id="3.40.50.150:FF:000032">
    <property type="entry name" value="Ribosomal RNA small subunit methyltransferase G"/>
    <property type="match status" value="1"/>
</dbReference>
<dbReference type="Gene3D" id="3.40.50.150">
    <property type="entry name" value="Vaccinia Virus protein VP39"/>
    <property type="match status" value="1"/>
</dbReference>
<dbReference type="HAMAP" id="MF_00074">
    <property type="entry name" value="16SrRNA_methyltr_G"/>
    <property type="match status" value="1"/>
</dbReference>
<dbReference type="InterPro" id="IPR003682">
    <property type="entry name" value="rRNA_ssu_MeTfrase_G"/>
</dbReference>
<dbReference type="InterPro" id="IPR029063">
    <property type="entry name" value="SAM-dependent_MTases_sf"/>
</dbReference>
<dbReference type="NCBIfam" id="TIGR00138">
    <property type="entry name" value="rsmG_gidB"/>
    <property type="match status" value="1"/>
</dbReference>
<dbReference type="PANTHER" id="PTHR31760">
    <property type="entry name" value="S-ADENOSYL-L-METHIONINE-DEPENDENT METHYLTRANSFERASES SUPERFAMILY PROTEIN"/>
    <property type="match status" value="1"/>
</dbReference>
<dbReference type="PANTHER" id="PTHR31760:SF0">
    <property type="entry name" value="S-ADENOSYL-L-METHIONINE-DEPENDENT METHYLTRANSFERASES SUPERFAMILY PROTEIN"/>
    <property type="match status" value="1"/>
</dbReference>
<dbReference type="Pfam" id="PF02527">
    <property type="entry name" value="GidB"/>
    <property type="match status" value="1"/>
</dbReference>
<dbReference type="PIRSF" id="PIRSF003078">
    <property type="entry name" value="GidB"/>
    <property type="match status" value="1"/>
</dbReference>
<dbReference type="SUPFAM" id="SSF53335">
    <property type="entry name" value="S-adenosyl-L-methionine-dependent methyltransferases"/>
    <property type="match status" value="1"/>
</dbReference>
<reference key="1">
    <citation type="submission" date="2007-04" db="EMBL/GenBank/DDBJ databases">
        <title>Complete sequence of Shewanella putrefaciens CN-32.</title>
        <authorList>
            <consortium name="US DOE Joint Genome Institute"/>
            <person name="Copeland A."/>
            <person name="Lucas S."/>
            <person name="Lapidus A."/>
            <person name="Barry K."/>
            <person name="Detter J.C."/>
            <person name="Glavina del Rio T."/>
            <person name="Hammon N."/>
            <person name="Israni S."/>
            <person name="Dalin E."/>
            <person name="Tice H."/>
            <person name="Pitluck S."/>
            <person name="Chain P."/>
            <person name="Malfatti S."/>
            <person name="Shin M."/>
            <person name="Vergez L."/>
            <person name="Schmutz J."/>
            <person name="Larimer F."/>
            <person name="Land M."/>
            <person name="Hauser L."/>
            <person name="Kyrpides N."/>
            <person name="Mikhailova N."/>
            <person name="Romine M.F."/>
            <person name="Fredrickson J."/>
            <person name="Tiedje J."/>
            <person name="Richardson P."/>
        </authorList>
    </citation>
    <scope>NUCLEOTIDE SEQUENCE [LARGE SCALE GENOMIC DNA]</scope>
    <source>
        <strain>CN-32 / ATCC BAA-453</strain>
    </source>
</reference>
<name>RSMG_SHEPC</name>
<feature type="chain" id="PRO_1000010202" description="Ribosomal RNA small subunit methyltransferase G">
    <location>
        <begin position="1"/>
        <end position="206"/>
    </location>
</feature>
<feature type="binding site" evidence="1">
    <location>
        <position position="74"/>
    </location>
    <ligand>
        <name>S-adenosyl-L-methionine</name>
        <dbReference type="ChEBI" id="CHEBI:59789"/>
    </ligand>
</feature>
<feature type="binding site" evidence="1">
    <location>
        <position position="79"/>
    </location>
    <ligand>
        <name>S-adenosyl-L-methionine</name>
        <dbReference type="ChEBI" id="CHEBI:59789"/>
    </ligand>
</feature>
<feature type="binding site" evidence="1">
    <location>
        <begin position="125"/>
        <end position="126"/>
    </location>
    <ligand>
        <name>S-adenosyl-L-methionine</name>
        <dbReference type="ChEBI" id="CHEBI:59789"/>
    </ligand>
</feature>
<feature type="binding site" evidence="1">
    <location>
        <position position="140"/>
    </location>
    <ligand>
        <name>S-adenosyl-L-methionine</name>
        <dbReference type="ChEBI" id="CHEBI:59789"/>
    </ligand>
</feature>
<gene>
    <name evidence="1" type="primary">rsmG</name>
    <name type="ordered locus">Sputcn32_3966</name>
</gene>
<comment type="function">
    <text evidence="1">Specifically methylates the N7 position of guanine in position 527 of 16S rRNA.</text>
</comment>
<comment type="catalytic activity">
    <reaction evidence="1">
        <text>guanosine(527) in 16S rRNA + S-adenosyl-L-methionine = N(7)-methylguanosine(527) in 16S rRNA + S-adenosyl-L-homocysteine</text>
        <dbReference type="Rhea" id="RHEA:42732"/>
        <dbReference type="Rhea" id="RHEA-COMP:10209"/>
        <dbReference type="Rhea" id="RHEA-COMP:10210"/>
        <dbReference type="ChEBI" id="CHEBI:57856"/>
        <dbReference type="ChEBI" id="CHEBI:59789"/>
        <dbReference type="ChEBI" id="CHEBI:74269"/>
        <dbReference type="ChEBI" id="CHEBI:74480"/>
        <dbReference type="EC" id="2.1.1.170"/>
    </reaction>
</comment>
<comment type="subcellular location">
    <subcellularLocation>
        <location evidence="1">Cytoplasm</location>
    </subcellularLocation>
</comment>
<comment type="similarity">
    <text evidence="1">Belongs to the methyltransferase superfamily. RNA methyltransferase RsmG family.</text>
</comment>
<accession>A4YCI8</accession>
<protein>
    <recommendedName>
        <fullName evidence="1">Ribosomal RNA small subunit methyltransferase G</fullName>
        <ecNumber evidence="1">2.1.1.170</ecNumber>
    </recommendedName>
    <alternativeName>
        <fullName evidence="1">16S rRNA 7-methylguanosine methyltransferase</fullName>
        <shortName evidence="1">16S rRNA m7G methyltransferase</shortName>
    </alternativeName>
</protein>
<keyword id="KW-0963">Cytoplasm</keyword>
<keyword id="KW-0489">Methyltransferase</keyword>
<keyword id="KW-0698">rRNA processing</keyword>
<keyword id="KW-0949">S-adenosyl-L-methionine</keyword>
<keyword id="KW-0808">Transferase</keyword>
<organism>
    <name type="scientific">Shewanella putrefaciens (strain CN-32 / ATCC BAA-453)</name>
    <dbReference type="NCBI Taxonomy" id="319224"/>
    <lineage>
        <taxon>Bacteria</taxon>
        <taxon>Pseudomonadati</taxon>
        <taxon>Pseudomonadota</taxon>
        <taxon>Gammaproteobacteria</taxon>
        <taxon>Alteromonadales</taxon>
        <taxon>Shewanellaceae</taxon>
        <taxon>Shewanella</taxon>
    </lineage>
</organism>